<dbReference type="EC" id="2.4.2.58" evidence="2"/>
<dbReference type="EMBL" id="AL391710">
    <property type="protein sequence ID" value="CAC05427.1"/>
    <property type="molecule type" value="Genomic_DNA"/>
</dbReference>
<dbReference type="EMBL" id="CP002688">
    <property type="protein sequence ID" value="AED91903.1"/>
    <property type="molecule type" value="Genomic_DNA"/>
</dbReference>
<dbReference type="EMBL" id="CP002688">
    <property type="protein sequence ID" value="AED91904.1"/>
    <property type="molecule type" value="Genomic_DNA"/>
</dbReference>
<dbReference type="EMBL" id="CP002688">
    <property type="protein sequence ID" value="AED91905.1"/>
    <property type="molecule type" value="Genomic_DNA"/>
</dbReference>
<dbReference type="EMBL" id="AY081351">
    <property type="protein sequence ID" value="AAL91240.1"/>
    <property type="molecule type" value="mRNA"/>
</dbReference>
<dbReference type="EMBL" id="BT000256">
    <property type="protein sequence ID" value="AAN15575.1"/>
    <property type="molecule type" value="mRNA"/>
</dbReference>
<dbReference type="EMBL" id="AY088436">
    <property type="protein sequence ID" value="AAM65972.1"/>
    <property type="molecule type" value="mRNA"/>
</dbReference>
<dbReference type="RefSeq" id="NP_196854.1">
    <property type="nucleotide sequence ID" value="NM_121353.4"/>
</dbReference>
<dbReference type="RefSeq" id="NP_850813.1">
    <property type="nucleotide sequence ID" value="NM_180482.2"/>
</dbReference>
<dbReference type="RefSeq" id="NP_974777.1">
    <property type="nucleotide sequence ID" value="NM_203048.2"/>
</dbReference>
<dbReference type="FunCoup" id="Q9FY51">
    <property type="interactions" value="1021"/>
</dbReference>
<dbReference type="STRING" id="3702.Q9FY51"/>
<dbReference type="iPTMnet" id="Q9FY51"/>
<dbReference type="PaxDb" id="3702-AT5G13500.1"/>
<dbReference type="ProteomicsDB" id="232087"/>
<dbReference type="EnsemblPlants" id="AT5G13500.1">
    <property type="protein sequence ID" value="AT5G13500.1"/>
    <property type="gene ID" value="AT5G13500"/>
</dbReference>
<dbReference type="EnsemblPlants" id="AT5G13500.2">
    <property type="protein sequence ID" value="AT5G13500.2"/>
    <property type="gene ID" value="AT5G13500"/>
</dbReference>
<dbReference type="EnsemblPlants" id="AT5G13500.3">
    <property type="protein sequence ID" value="AT5G13500.3"/>
    <property type="gene ID" value="AT5G13500"/>
</dbReference>
<dbReference type="GeneID" id="831194"/>
<dbReference type="Gramene" id="AT5G13500.1">
    <property type="protein sequence ID" value="AT5G13500.1"/>
    <property type="gene ID" value="AT5G13500"/>
</dbReference>
<dbReference type="Gramene" id="AT5G13500.2">
    <property type="protein sequence ID" value="AT5G13500.2"/>
    <property type="gene ID" value="AT5G13500"/>
</dbReference>
<dbReference type="Gramene" id="AT5G13500.3">
    <property type="protein sequence ID" value="AT5G13500.3"/>
    <property type="gene ID" value="AT5G13500"/>
</dbReference>
<dbReference type="KEGG" id="ath:AT5G13500"/>
<dbReference type="Araport" id="AT5G13500"/>
<dbReference type="TAIR" id="AT5G13500">
    <property type="gene designation" value="HPAT3"/>
</dbReference>
<dbReference type="eggNOG" id="ENOG502QQNK">
    <property type="taxonomic scope" value="Eukaryota"/>
</dbReference>
<dbReference type="HOGENOM" id="CLU_065254_0_0_1"/>
<dbReference type="InParanoid" id="Q9FY51"/>
<dbReference type="OMA" id="AQPPWDK"/>
<dbReference type="OrthoDB" id="10259977at2759"/>
<dbReference type="PhylomeDB" id="Q9FY51"/>
<dbReference type="BioCyc" id="ARA:AT5G13500-MONOMER"/>
<dbReference type="PRO" id="PR:Q9FY51"/>
<dbReference type="Proteomes" id="UP000006548">
    <property type="component" value="Chromosome 5"/>
</dbReference>
<dbReference type="ExpressionAtlas" id="Q9FY51">
    <property type="expression patterns" value="baseline and differential"/>
</dbReference>
<dbReference type="GO" id="GO:0005768">
    <property type="term" value="C:endosome"/>
    <property type="evidence" value="ECO:0007005"/>
    <property type="project" value="TAIR"/>
</dbReference>
<dbReference type="GO" id="GO:0005794">
    <property type="term" value="C:Golgi apparatus"/>
    <property type="evidence" value="ECO:0007005"/>
    <property type="project" value="TAIR"/>
</dbReference>
<dbReference type="GO" id="GO:0000138">
    <property type="term" value="C:Golgi trans cisterna"/>
    <property type="evidence" value="ECO:0000314"/>
    <property type="project" value="TAIR"/>
</dbReference>
<dbReference type="GO" id="GO:0016020">
    <property type="term" value="C:membrane"/>
    <property type="evidence" value="ECO:0007669"/>
    <property type="project" value="UniProtKB-KW"/>
</dbReference>
<dbReference type="GO" id="GO:0005802">
    <property type="term" value="C:trans-Golgi network"/>
    <property type="evidence" value="ECO:0007005"/>
    <property type="project" value="TAIR"/>
</dbReference>
<dbReference type="GO" id="GO:1990585">
    <property type="term" value="F:hydroxyproline O-arabinosyltransferase activity"/>
    <property type="evidence" value="ECO:0000314"/>
    <property type="project" value="TAIR"/>
</dbReference>
<dbReference type="InterPro" id="IPR056508">
    <property type="entry name" value="HPAT-like"/>
</dbReference>
<dbReference type="InterPro" id="IPR044845">
    <property type="entry name" value="HPAT/SRGT1-like"/>
</dbReference>
<dbReference type="PANTHER" id="PTHR31485:SF36">
    <property type="entry name" value="HYDROXYPROLINE O-ARABINOSYLTRANSFERASE 3"/>
    <property type="match status" value="1"/>
</dbReference>
<dbReference type="PANTHER" id="PTHR31485">
    <property type="entry name" value="PEPTIDYL SERINE ALPHA-GALACTOSYLTRANSFERASE"/>
    <property type="match status" value="1"/>
</dbReference>
<dbReference type="Pfam" id="PF23452">
    <property type="entry name" value="HPAT"/>
    <property type="match status" value="1"/>
</dbReference>
<comment type="function">
    <text evidence="2 4">Glycosyltransferase involved in the O-arabinosylation of several proteins including extensins and small signaling peptides (PubMed:24036508, PubMed:26577059). Catalyzes the transfer of the initial L-arabinose to the hydroxyl group of Hyp residues (PubMed:24036508). Contributes redundantly with HPAT1 and HPAT2 to arabinosylation of EXT3, but main contributor to arabinosylation of CLE peptides (PubMed:24036508).</text>
</comment>
<comment type="catalytic activity">
    <reaction evidence="2">
        <text>trans-4-hydroxy-L-prolyl-[protein] + UDP-beta-L-arabinofuranose = O-(beta-L-arabinofuranosyl)-trans-4-hydroxy-L-prolyl-[protein] + UDP + H(+)</text>
        <dbReference type="Rhea" id="RHEA:49472"/>
        <dbReference type="Rhea" id="RHEA-COMP:12408"/>
        <dbReference type="Rhea" id="RHEA-COMP:12409"/>
        <dbReference type="ChEBI" id="CHEBI:15378"/>
        <dbReference type="ChEBI" id="CHEBI:58223"/>
        <dbReference type="ChEBI" id="CHEBI:61463"/>
        <dbReference type="ChEBI" id="CHEBI:61965"/>
        <dbReference type="ChEBI" id="CHEBI:131610"/>
        <dbReference type="EC" id="2.4.2.58"/>
    </reaction>
</comment>
<comment type="subcellular location">
    <subcellularLocation>
        <location evidence="2">Golgi apparatus</location>
        <location evidence="2">cis-Golgi network membrane</location>
        <topology evidence="1">Single-pass type II membrane protein</topology>
    </subcellularLocation>
</comment>
<comment type="tissue specificity">
    <text evidence="2">Ubiquitous.</text>
</comment>
<comment type="disruption phenotype">
    <text evidence="2 3 4">No visible phenotype, but reduced level of arabinosylation of EXT3 (PubMed:24036508). Short-root-hair phenotype (PubMed:25944827). Hpat1 hpat3 double mutants have an impaired growth of pollen tubes, thereby causing a transmisson defect through the male gametophyte (PubMed:24036508, PubMed:26577059). Hpat1 hpat2 hpat3 triple mutants fail to produce detectable levels of Hyp-arabinosides, have low fertility and shorter pollen tubes (PubMed:26577059).</text>
</comment>
<evidence type="ECO:0000255" key="1"/>
<evidence type="ECO:0000269" key="2">
    <source>
    </source>
</evidence>
<evidence type="ECO:0000269" key="3">
    <source>
    </source>
</evidence>
<evidence type="ECO:0000269" key="4">
    <source>
    </source>
</evidence>
<evidence type="ECO:0000303" key="5">
    <source>
    </source>
</evidence>
<evidence type="ECO:0000312" key="6">
    <source>
        <dbReference type="Araport" id="AT5G13500"/>
    </source>
</evidence>
<evidence type="ECO:0000312" key="7">
    <source>
        <dbReference type="EMBL" id="CAC05427.1"/>
    </source>
</evidence>
<keyword id="KW-0328">Glycosyltransferase</keyword>
<keyword id="KW-0333">Golgi apparatus</keyword>
<keyword id="KW-0472">Membrane</keyword>
<keyword id="KW-1185">Reference proteome</keyword>
<keyword id="KW-0735">Signal-anchor</keyword>
<keyword id="KW-0808">Transferase</keyword>
<keyword id="KW-0812">Transmembrane</keyword>
<keyword id="KW-1133">Transmembrane helix</keyword>
<organism>
    <name type="scientific">Arabidopsis thaliana</name>
    <name type="common">Mouse-ear cress</name>
    <dbReference type="NCBI Taxonomy" id="3702"/>
    <lineage>
        <taxon>Eukaryota</taxon>
        <taxon>Viridiplantae</taxon>
        <taxon>Streptophyta</taxon>
        <taxon>Embryophyta</taxon>
        <taxon>Tracheophyta</taxon>
        <taxon>Spermatophyta</taxon>
        <taxon>Magnoliopsida</taxon>
        <taxon>eudicotyledons</taxon>
        <taxon>Gunneridae</taxon>
        <taxon>Pentapetalae</taxon>
        <taxon>rosids</taxon>
        <taxon>malvids</taxon>
        <taxon>Brassicales</taxon>
        <taxon>Brassicaceae</taxon>
        <taxon>Camelineae</taxon>
        <taxon>Arabidopsis</taxon>
    </lineage>
</organism>
<reference key="1">
    <citation type="journal article" date="2000" name="Nature">
        <title>Sequence and analysis of chromosome 5 of the plant Arabidopsis thaliana.</title>
        <authorList>
            <person name="Tabata S."/>
            <person name="Kaneko T."/>
            <person name="Nakamura Y."/>
            <person name="Kotani H."/>
            <person name="Kato T."/>
            <person name="Asamizu E."/>
            <person name="Miyajima N."/>
            <person name="Sasamoto S."/>
            <person name="Kimura T."/>
            <person name="Hosouchi T."/>
            <person name="Kawashima K."/>
            <person name="Kohara M."/>
            <person name="Matsumoto M."/>
            <person name="Matsuno A."/>
            <person name="Muraki A."/>
            <person name="Nakayama S."/>
            <person name="Nakazaki N."/>
            <person name="Naruo K."/>
            <person name="Okumura S."/>
            <person name="Shinpo S."/>
            <person name="Takeuchi C."/>
            <person name="Wada T."/>
            <person name="Watanabe A."/>
            <person name="Yamada M."/>
            <person name="Yasuda M."/>
            <person name="Sato S."/>
            <person name="de la Bastide M."/>
            <person name="Huang E."/>
            <person name="Spiegel L."/>
            <person name="Gnoj L."/>
            <person name="O'Shaughnessy A."/>
            <person name="Preston R."/>
            <person name="Habermann K."/>
            <person name="Murray J."/>
            <person name="Johnson D."/>
            <person name="Rohlfing T."/>
            <person name="Nelson J."/>
            <person name="Stoneking T."/>
            <person name="Pepin K."/>
            <person name="Spieth J."/>
            <person name="Sekhon M."/>
            <person name="Armstrong J."/>
            <person name="Becker M."/>
            <person name="Belter E."/>
            <person name="Cordum H."/>
            <person name="Cordes M."/>
            <person name="Courtney L."/>
            <person name="Courtney W."/>
            <person name="Dante M."/>
            <person name="Du H."/>
            <person name="Edwards J."/>
            <person name="Fryman J."/>
            <person name="Haakensen B."/>
            <person name="Lamar E."/>
            <person name="Latreille P."/>
            <person name="Leonard S."/>
            <person name="Meyer R."/>
            <person name="Mulvaney E."/>
            <person name="Ozersky P."/>
            <person name="Riley A."/>
            <person name="Strowmatt C."/>
            <person name="Wagner-McPherson C."/>
            <person name="Wollam A."/>
            <person name="Yoakum M."/>
            <person name="Bell M."/>
            <person name="Dedhia N."/>
            <person name="Parnell L."/>
            <person name="Shah R."/>
            <person name="Rodriguez M."/>
            <person name="Hoon See L."/>
            <person name="Vil D."/>
            <person name="Baker J."/>
            <person name="Kirchoff K."/>
            <person name="Toth K."/>
            <person name="King L."/>
            <person name="Bahret A."/>
            <person name="Miller B."/>
            <person name="Marra M.A."/>
            <person name="Martienssen R."/>
            <person name="McCombie W.R."/>
            <person name="Wilson R.K."/>
            <person name="Murphy G."/>
            <person name="Bancroft I."/>
            <person name="Volckaert G."/>
            <person name="Wambutt R."/>
            <person name="Duesterhoeft A."/>
            <person name="Stiekema W."/>
            <person name="Pohl T."/>
            <person name="Entian K.-D."/>
            <person name="Terryn N."/>
            <person name="Hartley N."/>
            <person name="Bent E."/>
            <person name="Johnson S."/>
            <person name="Langham S.-A."/>
            <person name="McCullagh B."/>
            <person name="Robben J."/>
            <person name="Grymonprez B."/>
            <person name="Zimmermann W."/>
            <person name="Ramsperger U."/>
            <person name="Wedler H."/>
            <person name="Balke K."/>
            <person name="Wedler E."/>
            <person name="Peters S."/>
            <person name="van Staveren M."/>
            <person name="Dirkse W."/>
            <person name="Mooijman P."/>
            <person name="Klein Lankhorst R."/>
            <person name="Weitzenegger T."/>
            <person name="Bothe G."/>
            <person name="Rose M."/>
            <person name="Hauf J."/>
            <person name="Berneiser S."/>
            <person name="Hempel S."/>
            <person name="Feldpausch M."/>
            <person name="Lamberth S."/>
            <person name="Villarroel R."/>
            <person name="Gielen J."/>
            <person name="Ardiles W."/>
            <person name="Bents O."/>
            <person name="Lemcke K."/>
            <person name="Kolesov G."/>
            <person name="Mayer K.F.X."/>
            <person name="Rudd S."/>
            <person name="Schoof H."/>
            <person name="Schueller C."/>
            <person name="Zaccaria P."/>
            <person name="Mewes H.-W."/>
            <person name="Bevan M."/>
            <person name="Fransz P.F."/>
        </authorList>
    </citation>
    <scope>NUCLEOTIDE SEQUENCE [LARGE SCALE GENOMIC DNA]</scope>
    <source>
        <strain>cv. Columbia</strain>
    </source>
</reference>
<reference key="2">
    <citation type="journal article" date="2017" name="Plant J.">
        <title>Araport11: a complete reannotation of the Arabidopsis thaliana reference genome.</title>
        <authorList>
            <person name="Cheng C.Y."/>
            <person name="Krishnakumar V."/>
            <person name="Chan A.P."/>
            <person name="Thibaud-Nissen F."/>
            <person name="Schobel S."/>
            <person name="Town C.D."/>
        </authorList>
    </citation>
    <scope>GENOME REANNOTATION</scope>
    <source>
        <strain>cv. Columbia</strain>
    </source>
</reference>
<reference key="3">
    <citation type="journal article" date="2003" name="Science">
        <title>Empirical analysis of transcriptional activity in the Arabidopsis genome.</title>
        <authorList>
            <person name="Yamada K."/>
            <person name="Lim J."/>
            <person name="Dale J.M."/>
            <person name="Chen H."/>
            <person name="Shinn P."/>
            <person name="Palm C.J."/>
            <person name="Southwick A.M."/>
            <person name="Wu H.C."/>
            <person name="Kim C.J."/>
            <person name="Nguyen M."/>
            <person name="Pham P.K."/>
            <person name="Cheuk R.F."/>
            <person name="Karlin-Newmann G."/>
            <person name="Liu S.X."/>
            <person name="Lam B."/>
            <person name="Sakano H."/>
            <person name="Wu T."/>
            <person name="Yu G."/>
            <person name="Miranda M."/>
            <person name="Quach H.L."/>
            <person name="Tripp M."/>
            <person name="Chang C.H."/>
            <person name="Lee J.M."/>
            <person name="Toriumi M.J."/>
            <person name="Chan M.M."/>
            <person name="Tang C.C."/>
            <person name="Onodera C.S."/>
            <person name="Deng J.M."/>
            <person name="Akiyama K."/>
            <person name="Ansari Y."/>
            <person name="Arakawa T."/>
            <person name="Banh J."/>
            <person name="Banno F."/>
            <person name="Bowser L."/>
            <person name="Brooks S.Y."/>
            <person name="Carninci P."/>
            <person name="Chao Q."/>
            <person name="Choy N."/>
            <person name="Enju A."/>
            <person name="Goldsmith A.D."/>
            <person name="Gurjal M."/>
            <person name="Hansen N.F."/>
            <person name="Hayashizaki Y."/>
            <person name="Johnson-Hopson C."/>
            <person name="Hsuan V.W."/>
            <person name="Iida K."/>
            <person name="Karnes M."/>
            <person name="Khan S."/>
            <person name="Koesema E."/>
            <person name="Ishida J."/>
            <person name="Jiang P.X."/>
            <person name="Jones T."/>
            <person name="Kawai J."/>
            <person name="Kamiya A."/>
            <person name="Meyers C."/>
            <person name="Nakajima M."/>
            <person name="Narusaka M."/>
            <person name="Seki M."/>
            <person name="Sakurai T."/>
            <person name="Satou M."/>
            <person name="Tamse R."/>
            <person name="Vaysberg M."/>
            <person name="Wallender E.K."/>
            <person name="Wong C."/>
            <person name="Yamamura Y."/>
            <person name="Yuan S."/>
            <person name="Shinozaki K."/>
            <person name="Davis R.W."/>
            <person name="Theologis A."/>
            <person name="Ecker J.R."/>
        </authorList>
    </citation>
    <scope>NUCLEOTIDE SEQUENCE [LARGE SCALE MRNA]</scope>
    <source>
        <strain>cv. Columbia</strain>
    </source>
</reference>
<reference key="4">
    <citation type="submission" date="2002-03" db="EMBL/GenBank/DDBJ databases">
        <title>Full-length cDNA from Arabidopsis thaliana.</title>
        <authorList>
            <person name="Brover V.V."/>
            <person name="Troukhan M.E."/>
            <person name="Alexandrov N.A."/>
            <person name="Lu Y.-P."/>
            <person name="Flavell R.B."/>
            <person name="Feldmann K.A."/>
        </authorList>
    </citation>
    <scope>NUCLEOTIDE SEQUENCE [LARGE SCALE MRNA]</scope>
</reference>
<reference key="5">
    <citation type="journal article" date="2013" name="Nat. Chem. Biol.">
        <title>Identification of three hydroxyproline O-arabinosyltransferases in Arabidopsis thaliana.</title>
        <authorList>
            <person name="Ogawa-Ohnishi M."/>
            <person name="Matsushita W."/>
            <person name="Matsubayashi Y."/>
        </authorList>
    </citation>
    <scope>FUNCTION</scope>
    <scope>CATALYTIC ACTIVITY</scope>
    <scope>TISSUE SPECIFICITY</scope>
    <scope>SUBCELLULAR LOCATION</scope>
    <scope>DISRUPTION PHENOTYPE</scope>
</reference>
<reference key="6">
    <citation type="journal article" date="2015" name="Plant Physiol.">
        <title>Low sugar is not always good: impact of specific o-glycan defects on tip growth in Arabidopsis.</title>
        <authorList>
            <person name="Velasquez S.M."/>
            <person name="Marzol E."/>
            <person name="Borassi C."/>
            <person name="Pol-Fachin L."/>
            <person name="Ricardi M.M."/>
            <person name="Mangano S."/>
            <person name="Juarez S.P."/>
            <person name="Salter J.D."/>
            <person name="Dorosz J.G."/>
            <person name="Marcus S.E."/>
            <person name="Knox J.P."/>
            <person name="Dinneny J.R."/>
            <person name="Iusem N.D."/>
            <person name="Verli H."/>
            <person name="Estevez J.M."/>
        </authorList>
    </citation>
    <scope>DISRUPTION PHENOTYPE</scope>
</reference>
<reference key="7">
    <citation type="journal article" date="2016" name="Plant J.">
        <title>Hydroxyproline O-arabinosyltransferase mutants oppositely alter tip growth in Arabidopsis thaliana and Physcomitrella patens.</title>
        <authorList>
            <person name="MacAlister C.A."/>
            <person name="Ortiz-Ramirez C."/>
            <person name="Becker J.D."/>
            <person name="Feijo J.A."/>
            <person name="Lippman Z.B."/>
        </authorList>
    </citation>
    <scope>FUNCTION</scope>
    <scope>DISRUPTION PHENOTYPE</scope>
</reference>
<name>HPAT3_ARATH</name>
<proteinExistence type="evidence at protein level"/>
<protein>
    <recommendedName>
        <fullName evidence="5">Hydroxyproline O-arabinosyltransferase 3</fullName>
        <ecNumber evidence="2">2.4.2.58</ecNumber>
    </recommendedName>
</protein>
<accession>Q9FY51</accession>
<gene>
    <name evidence="5" type="primary">HPAT3</name>
    <name evidence="6" type="ordered locus">At5g13500</name>
    <name evidence="7" type="ORF">T6I14.30</name>
</gene>
<sequence length="358" mass="40333">MGKASGLLLFLLGFGFFVVTYNLLTLIVHNRSGVSNSDGSPLLDPVVQMPLNIRKAKSSPAPFHVALTATDAPYNKWQCRIMYYWYKQKKALPGSDMGGFTRILHSGNSDNLMDEIPTFVVDPLPPGLDRGYVVLNRPWAFVQWLERATIKEDYVLMAEPDHVFVNPLPNLAVGGFPAAFPFFYITPEKYENIVRKYYPAEMGPVTNIDPIGNSPVIISKESLEKIAPTWMNVSLTMKNDPETDKAFGWVLEMYGYAIASAIHGVRHILRKDFMLQPPWDLSTKGKFIIHYTYGCDYNMKGELTYGKIGEWRFDKRSHLRGPPPRNMSLPPPGVPESVVTLVKMVNEATATIPNWDTL</sequence>
<feature type="chain" id="PRO_0000437956" description="Hydroxyproline O-arabinosyltransferase 3">
    <location>
        <begin position="1"/>
        <end position="358"/>
    </location>
</feature>
<feature type="transmembrane region" description="Helical; Signal-anchor" evidence="1">
    <location>
        <begin position="8"/>
        <end position="28"/>
    </location>
</feature>